<comment type="function">
    <text evidence="1">Catalyzes the reversible conversion of 2-phosphoglycerate (2-PG) into phosphoenolpyruvate (PEP). It is essential for the degradation of carbohydrates via glycolysis.</text>
</comment>
<comment type="catalytic activity">
    <reaction evidence="1">
        <text>(2R)-2-phosphoglycerate = phosphoenolpyruvate + H2O</text>
        <dbReference type="Rhea" id="RHEA:10164"/>
        <dbReference type="ChEBI" id="CHEBI:15377"/>
        <dbReference type="ChEBI" id="CHEBI:58289"/>
        <dbReference type="ChEBI" id="CHEBI:58702"/>
        <dbReference type="EC" id="4.2.1.11"/>
    </reaction>
</comment>
<comment type="cofactor">
    <cofactor evidence="1">
        <name>Mg(2+)</name>
        <dbReference type="ChEBI" id="CHEBI:18420"/>
    </cofactor>
    <text evidence="1">Binds a second Mg(2+) ion via substrate during catalysis.</text>
</comment>
<comment type="pathway">
    <text evidence="1">Carbohydrate degradation; glycolysis; pyruvate from D-glyceraldehyde 3-phosphate: step 4/5.</text>
</comment>
<comment type="subcellular location">
    <subcellularLocation>
        <location evidence="1">Cytoplasm</location>
    </subcellularLocation>
    <subcellularLocation>
        <location evidence="1">Secreted</location>
    </subcellularLocation>
    <subcellularLocation>
        <location evidence="1">Cell surface</location>
    </subcellularLocation>
    <text evidence="1">Fractions of enolase are present in both the cytoplasm and on the cell surface.</text>
</comment>
<comment type="similarity">
    <text evidence="1">Belongs to the enolase family.</text>
</comment>
<accession>C1F9E6</accession>
<proteinExistence type="inferred from homology"/>
<name>ENO_ACIC5</name>
<dbReference type="EC" id="4.2.1.11" evidence="1"/>
<dbReference type="EMBL" id="CP001472">
    <property type="protein sequence ID" value="ACO34255.1"/>
    <property type="molecule type" value="Genomic_DNA"/>
</dbReference>
<dbReference type="RefSeq" id="WP_012680701.1">
    <property type="nucleotide sequence ID" value="NC_012483.1"/>
</dbReference>
<dbReference type="SMR" id="C1F9E6"/>
<dbReference type="FunCoup" id="C1F9E6">
    <property type="interactions" value="487"/>
</dbReference>
<dbReference type="STRING" id="240015.ACP_0300"/>
<dbReference type="KEGG" id="aca:ACP_0300"/>
<dbReference type="eggNOG" id="COG0148">
    <property type="taxonomic scope" value="Bacteria"/>
</dbReference>
<dbReference type="HOGENOM" id="CLU_031223_2_1_0"/>
<dbReference type="InParanoid" id="C1F9E6"/>
<dbReference type="OrthoDB" id="9804716at2"/>
<dbReference type="UniPathway" id="UPA00109">
    <property type="reaction ID" value="UER00187"/>
</dbReference>
<dbReference type="Proteomes" id="UP000002207">
    <property type="component" value="Chromosome"/>
</dbReference>
<dbReference type="GO" id="GO:0009986">
    <property type="term" value="C:cell surface"/>
    <property type="evidence" value="ECO:0007669"/>
    <property type="project" value="UniProtKB-SubCell"/>
</dbReference>
<dbReference type="GO" id="GO:0005576">
    <property type="term" value="C:extracellular region"/>
    <property type="evidence" value="ECO:0007669"/>
    <property type="project" value="UniProtKB-SubCell"/>
</dbReference>
<dbReference type="GO" id="GO:0000015">
    <property type="term" value="C:phosphopyruvate hydratase complex"/>
    <property type="evidence" value="ECO:0007669"/>
    <property type="project" value="InterPro"/>
</dbReference>
<dbReference type="GO" id="GO:0000287">
    <property type="term" value="F:magnesium ion binding"/>
    <property type="evidence" value="ECO:0007669"/>
    <property type="project" value="UniProtKB-UniRule"/>
</dbReference>
<dbReference type="GO" id="GO:0004634">
    <property type="term" value="F:phosphopyruvate hydratase activity"/>
    <property type="evidence" value="ECO:0007669"/>
    <property type="project" value="UniProtKB-UniRule"/>
</dbReference>
<dbReference type="GO" id="GO:0006096">
    <property type="term" value="P:glycolytic process"/>
    <property type="evidence" value="ECO:0007669"/>
    <property type="project" value="UniProtKB-UniRule"/>
</dbReference>
<dbReference type="CDD" id="cd03313">
    <property type="entry name" value="enolase"/>
    <property type="match status" value="1"/>
</dbReference>
<dbReference type="FunFam" id="3.20.20.120:FF:000001">
    <property type="entry name" value="Enolase"/>
    <property type="match status" value="1"/>
</dbReference>
<dbReference type="FunFam" id="3.30.390.10:FF:000001">
    <property type="entry name" value="Enolase"/>
    <property type="match status" value="1"/>
</dbReference>
<dbReference type="Gene3D" id="3.20.20.120">
    <property type="entry name" value="Enolase-like C-terminal domain"/>
    <property type="match status" value="1"/>
</dbReference>
<dbReference type="Gene3D" id="3.30.390.10">
    <property type="entry name" value="Enolase-like, N-terminal domain"/>
    <property type="match status" value="1"/>
</dbReference>
<dbReference type="HAMAP" id="MF_00318">
    <property type="entry name" value="Enolase"/>
    <property type="match status" value="1"/>
</dbReference>
<dbReference type="InterPro" id="IPR000941">
    <property type="entry name" value="Enolase"/>
</dbReference>
<dbReference type="InterPro" id="IPR036849">
    <property type="entry name" value="Enolase-like_C_sf"/>
</dbReference>
<dbReference type="InterPro" id="IPR029017">
    <property type="entry name" value="Enolase-like_N"/>
</dbReference>
<dbReference type="InterPro" id="IPR020810">
    <property type="entry name" value="Enolase_C"/>
</dbReference>
<dbReference type="InterPro" id="IPR020809">
    <property type="entry name" value="Enolase_CS"/>
</dbReference>
<dbReference type="InterPro" id="IPR020811">
    <property type="entry name" value="Enolase_N"/>
</dbReference>
<dbReference type="NCBIfam" id="TIGR01060">
    <property type="entry name" value="eno"/>
    <property type="match status" value="1"/>
</dbReference>
<dbReference type="PANTHER" id="PTHR11902">
    <property type="entry name" value="ENOLASE"/>
    <property type="match status" value="1"/>
</dbReference>
<dbReference type="PANTHER" id="PTHR11902:SF1">
    <property type="entry name" value="ENOLASE"/>
    <property type="match status" value="1"/>
</dbReference>
<dbReference type="Pfam" id="PF00113">
    <property type="entry name" value="Enolase_C"/>
    <property type="match status" value="1"/>
</dbReference>
<dbReference type="Pfam" id="PF03952">
    <property type="entry name" value="Enolase_N"/>
    <property type="match status" value="1"/>
</dbReference>
<dbReference type="PIRSF" id="PIRSF001400">
    <property type="entry name" value="Enolase"/>
    <property type="match status" value="1"/>
</dbReference>
<dbReference type="PRINTS" id="PR00148">
    <property type="entry name" value="ENOLASE"/>
</dbReference>
<dbReference type="SFLD" id="SFLDF00002">
    <property type="entry name" value="enolase"/>
    <property type="match status" value="1"/>
</dbReference>
<dbReference type="SFLD" id="SFLDG00178">
    <property type="entry name" value="enolase"/>
    <property type="match status" value="1"/>
</dbReference>
<dbReference type="SMART" id="SM01192">
    <property type="entry name" value="Enolase_C"/>
    <property type="match status" value="1"/>
</dbReference>
<dbReference type="SMART" id="SM01193">
    <property type="entry name" value="Enolase_N"/>
    <property type="match status" value="1"/>
</dbReference>
<dbReference type="SUPFAM" id="SSF51604">
    <property type="entry name" value="Enolase C-terminal domain-like"/>
    <property type="match status" value="1"/>
</dbReference>
<dbReference type="SUPFAM" id="SSF54826">
    <property type="entry name" value="Enolase N-terminal domain-like"/>
    <property type="match status" value="1"/>
</dbReference>
<dbReference type="PROSITE" id="PS00164">
    <property type="entry name" value="ENOLASE"/>
    <property type="match status" value="1"/>
</dbReference>
<keyword id="KW-0963">Cytoplasm</keyword>
<keyword id="KW-0324">Glycolysis</keyword>
<keyword id="KW-0456">Lyase</keyword>
<keyword id="KW-0460">Magnesium</keyword>
<keyword id="KW-0479">Metal-binding</keyword>
<keyword id="KW-1185">Reference proteome</keyword>
<keyword id="KW-0964">Secreted</keyword>
<gene>
    <name evidence="1" type="primary">eno</name>
    <name type="ordered locus">ACP_0300</name>
</gene>
<protein>
    <recommendedName>
        <fullName evidence="1">Enolase</fullName>
        <ecNumber evidence="1">4.2.1.11</ecNumber>
    </recommendedName>
    <alternativeName>
        <fullName evidence="1">2-phospho-D-glycerate hydro-lyase</fullName>
    </alternativeName>
    <alternativeName>
        <fullName evidence="1">2-phosphoglycerate dehydratase</fullName>
    </alternativeName>
</protein>
<reference key="1">
    <citation type="journal article" date="2009" name="Appl. Environ. Microbiol.">
        <title>Three genomes from the phylum Acidobacteria provide insight into the lifestyles of these microorganisms in soils.</title>
        <authorList>
            <person name="Ward N.L."/>
            <person name="Challacombe J.F."/>
            <person name="Janssen P.H."/>
            <person name="Henrissat B."/>
            <person name="Coutinho P.M."/>
            <person name="Wu M."/>
            <person name="Xie G."/>
            <person name="Haft D.H."/>
            <person name="Sait M."/>
            <person name="Badger J."/>
            <person name="Barabote R.D."/>
            <person name="Bradley B."/>
            <person name="Brettin T.S."/>
            <person name="Brinkac L.M."/>
            <person name="Bruce D."/>
            <person name="Creasy T."/>
            <person name="Daugherty S.C."/>
            <person name="Davidsen T.M."/>
            <person name="DeBoy R.T."/>
            <person name="Detter J.C."/>
            <person name="Dodson R.J."/>
            <person name="Durkin A.S."/>
            <person name="Ganapathy A."/>
            <person name="Gwinn-Giglio M."/>
            <person name="Han C.S."/>
            <person name="Khouri H."/>
            <person name="Kiss H."/>
            <person name="Kothari S.P."/>
            <person name="Madupu R."/>
            <person name="Nelson K.E."/>
            <person name="Nelson W.C."/>
            <person name="Paulsen I."/>
            <person name="Penn K."/>
            <person name="Ren Q."/>
            <person name="Rosovitz M.J."/>
            <person name="Selengut J.D."/>
            <person name="Shrivastava S."/>
            <person name="Sullivan S.A."/>
            <person name="Tapia R."/>
            <person name="Thompson L.S."/>
            <person name="Watkins K.L."/>
            <person name="Yang Q."/>
            <person name="Yu C."/>
            <person name="Zafar N."/>
            <person name="Zhou L."/>
            <person name="Kuske C.R."/>
        </authorList>
    </citation>
    <scope>NUCLEOTIDE SEQUENCE [LARGE SCALE GENOMIC DNA]</scope>
    <source>
        <strain>ATCC 51196 / DSM 11244 / BCRC 80197 / JCM 7670 / NBRC 15755 / NCIMB 13165 / 161</strain>
    </source>
</reference>
<feature type="chain" id="PRO_1000132975" description="Enolase">
    <location>
        <begin position="1"/>
        <end position="430"/>
    </location>
</feature>
<feature type="active site" description="Proton donor" evidence="1">
    <location>
        <position position="205"/>
    </location>
</feature>
<feature type="active site" description="Proton acceptor" evidence="1">
    <location>
        <position position="340"/>
    </location>
</feature>
<feature type="binding site" evidence="1">
    <location>
        <position position="163"/>
    </location>
    <ligand>
        <name>(2R)-2-phosphoglycerate</name>
        <dbReference type="ChEBI" id="CHEBI:58289"/>
    </ligand>
</feature>
<feature type="binding site" evidence="1">
    <location>
        <position position="242"/>
    </location>
    <ligand>
        <name>Mg(2+)</name>
        <dbReference type="ChEBI" id="CHEBI:18420"/>
    </ligand>
</feature>
<feature type="binding site" evidence="1">
    <location>
        <position position="288"/>
    </location>
    <ligand>
        <name>Mg(2+)</name>
        <dbReference type="ChEBI" id="CHEBI:18420"/>
    </ligand>
</feature>
<feature type="binding site" evidence="1">
    <location>
        <position position="315"/>
    </location>
    <ligand>
        <name>Mg(2+)</name>
        <dbReference type="ChEBI" id="CHEBI:18420"/>
    </ligand>
</feature>
<feature type="binding site" evidence="1">
    <location>
        <position position="340"/>
    </location>
    <ligand>
        <name>(2R)-2-phosphoglycerate</name>
        <dbReference type="ChEBI" id="CHEBI:58289"/>
    </ligand>
</feature>
<feature type="binding site" evidence="1">
    <location>
        <position position="369"/>
    </location>
    <ligand>
        <name>(2R)-2-phosphoglycerate</name>
        <dbReference type="ChEBI" id="CHEBI:58289"/>
    </ligand>
</feature>
<feature type="binding site" evidence="1">
    <location>
        <position position="370"/>
    </location>
    <ligand>
        <name>(2R)-2-phosphoglycerate</name>
        <dbReference type="ChEBI" id="CHEBI:58289"/>
    </ligand>
</feature>
<feature type="binding site" evidence="1">
    <location>
        <position position="391"/>
    </location>
    <ligand>
        <name>(2R)-2-phosphoglycerate</name>
        <dbReference type="ChEBI" id="CHEBI:58289"/>
    </ligand>
</feature>
<organism>
    <name type="scientific">Acidobacterium capsulatum (strain ATCC 51196 / DSM 11244 / BCRC 80197 / JCM 7670 / NBRC 15755 / NCIMB 13165 / 161)</name>
    <dbReference type="NCBI Taxonomy" id="240015"/>
    <lineage>
        <taxon>Bacteria</taxon>
        <taxon>Pseudomonadati</taxon>
        <taxon>Acidobacteriota</taxon>
        <taxon>Terriglobia</taxon>
        <taxon>Terriglobales</taxon>
        <taxon>Acidobacteriaceae</taxon>
        <taxon>Acidobacterium</taxon>
    </lineage>
</organism>
<evidence type="ECO:0000255" key="1">
    <source>
        <dbReference type="HAMAP-Rule" id="MF_00318"/>
    </source>
</evidence>
<sequence length="430" mass="46538">MTEIAAIHAREILDSRGNPTVEADVLLADGTLGRAAVPSGASTGEHEAVELRDGDKSHYLGKGVLKAVDNIESVIAPELEGMDAANQRLLDATMIALDGTPNKGRLGANAILAVSMAAARASANSLKIPLYRYLGGANASILPTPMMNILNGGAHADNNVDFQEFMVMPVGAERFSEALRWGAEIFHTLKGVLKKKGYNTAVGDEGGFAPSLSSNTEAIEVILEAIELAGYKAGEDVAIALDPAASEFYDKEKGKYIFKKSDKSEKTSEEMAQYWESWTRQYPIISIEDGFAEDDWQGWRYFTELVGSRIQLVGDDLFVTNTERLQRGIEEGIANSILIKVNQIGTVSETFEAIELGRRYGYTSIISHRSGETEDTFIADLAVATGAGQIKTGSASRTDRIAKYNQLLRIEEQLGQTGEFLGLEAVNFGE</sequence>